<gene>
    <name type="primary">tuf</name>
</gene>
<reference key="1">
    <citation type="journal article" date="1999" name="FEMS Microbiol. Lett.">
        <title>The characterization of Mycoplasma synoviae EF-Tu protein and proteins involved in hemadherence and their N-terminal amino acid sequences.</title>
        <authorList>
            <person name="Bencina D."/>
            <person name="Narat M."/>
            <person name="Dovc P."/>
            <person name="Drobnic-Valic M."/>
            <person name="Habe F."/>
            <person name="Kleven S.H."/>
        </authorList>
    </citation>
    <scope>PROTEIN SEQUENCE</scope>
    <source>
        <strain>ULB 925 / Isolate KF9</strain>
    </source>
</reference>
<evidence type="ECO:0000250" key="1"/>
<evidence type="ECO:0000305" key="2"/>
<sequence>AKLDFDRSKEHVNVGTIGVH</sequence>
<organism>
    <name type="scientific">Mycoplasmopsis synoviae</name>
    <name type="common">Mycoplasma synoviae</name>
    <dbReference type="NCBI Taxonomy" id="2109"/>
    <lineage>
        <taxon>Bacteria</taxon>
        <taxon>Bacillati</taxon>
        <taxon>Mycoplasmatota</taxon>
        <taxon>Mycoplasmoidales</taxon>
        <taxon>Metamycoplasmataceae</taxon>
        <taxon>Mycoplasmopsis</taxon>
    </lineage>
</organism>
<proteinExistence type="evidence at protein level"/>
<accession>P81407</accession>
<name>EFTU_MYCSY</name>
<protein>
    <recommendedName>
        <fullName>Elongation factor Tu</fullName>
        <shortName>EF-Tu</shortName>
    </recommendedName>
</protein>
<dbReference type="GO" id="GO:0005737">
    <property type="term" value="C:cytoplasm"/>
    <property type="evidence" value="ECO:0007669"/>
    <property type="project" value="UniProtKB-SubCell"/>
</dbReference>
<dbReference type="GO" id="GO:0005525">
    <property type="term" value="F:GTP binding"/>
    <property type="evidence" value="ECO:0007669"/>
    <property type="project" value="UniProtKB-KW"/>
</dbReference>
<dbReference type="GO" id="GO:0003746">
    <property type="term" value="F:translation elongation factor activity"/>
    <property type="evidence" value="ECO:0007669"/>
    <property type="project" value="UniProtKB-KW"/>
</dbReference>
<comment type="function">
    <text>This protein promotes the GTP-dependent binding of aminoacyl-tRNA to the A-site of ribosomes during protein biosynthesis.</text>
</comment>
<comment type="subunit">
    <text evidence="1">Monomer.</text>
</comment>
<comment type="subcellular location">
    <subcellularLocation>
        <location>Cytoplasm</location>
    </subcellularLocation>
</comment>
<comment type="similarity">
    <text evidence="2">Belongs to the GTP-binding elongation factor family. EF-Tu/EF-1A subfamily.</text>
</comment>
<keyword id="KW-0963">Cytoplasm</keyword>
<keyword id="KW-0903">Direct protein sequencing</keyword>
<keyword id="KW-0251">Elongation factor</keyword>
<keyword id="KW-0342">GTP-binding</keyword>
<keyword id="KW-0547">Nucleotide-binding</keyword>
<keyword id="KW-0648">Protein biosynthesis</keyword>
<feature type="chain" id="PRO_0000091352" description="Elongation factor Tu">
    <location>
        <begin position="1"/>
        <end position="20" status="greater than"/>
    </location>
</feature>
<feature type="non-terminal residue">
    <location>
        <position position="20"/>
    </location>
</feature>